<comment type="function">
    <text evidence="1">Responsible for synthesis of pseudouridine from uracil-55 in the psi GC loop of transfer RNAs.</text>
</comment>
<comment type="catalytic activity">
    <reaction evidence="1">
        <text>uridine(55) in tRNA = pseudouridine(55) in tRNA</text>
        <dbReference type="Rhea" id="RHEA:42532"/>
        <dbReference type="Rhea" id="RHEA-COMP:10101"/>
        <dbReference type="Rhea" id="RHEA-COMP:10102"/>
        <dbReference type="ChEBI" id="CHEBI:65314"/>
        <dbReference type="ChEBI" id="CHEBI:65315"/>
        <dbReference type="EC" id="5.4.99.25"/>
    </reaction>
</comment>
<comment type="similarity">
    <text evidence="1">Belongs to the pseudouridine synthase TruB family. Type 1 subfamily.</text>
</comment>
<organism>
    <name type="scientific">Thermotoga petrophila (strain ATCC BAA-488 / DSM 13995 / JCM 10881 / RKU-1)</name>
    <dbReference type="NCBI Taxonomy" id="390874"/>
    <lineage>
        <taxon>Bacteria</taxon>
        <taxon>Thermotogati</taxon>
        <taxon>Thermotogota</taxon>
        <taxon>Thermotogae</taxon>
        <taxon>Thermotogales</taxon>
        <taxon>Thermotogaceae</taxon>
        <taxon>Thermotoga</taxon>
    </lineage>
</organism>
<evidence type="ECO:0000255" key="1">
    <source>
        <dbReference type="HAMAP-Rule" id="MF_01080"/>
    </source>
</evidence>
<proteinExistence type="inferred from homology"/>
<accession>A5IIS7</accession>
<sequence>MKHGILVAYKPKGPTSHDVVDEVRKKLKTRKVGHGGTLDPFACGVLIIGVNQGTRILEFYKDLKKVYWVKMRLGLITETFDITGEVVEERECNATEEEIREAIFSFVGEYDQVPPAYSAKKHKGERLYKLAREGKIINLPPKRVKIFKIWDVNVEGRDVSFRAEVSPGTYIRSLCMDIGYKLGCGATAVELVRESVGSYTIEESLNVFEAAPEEIENRIIPLEKCLEWLPRVVVHQESTKTILNGSQIHLEMLKEWDGFKKGEVVRVFNEEGRLLALAEAERNSSFLETLRKHERNERVLTLRKVFNTR</sequence>
<keyword id="KW-0413">Isomerase</keyword>
<keyword id="KW-0819">tRNA processing</keyword>
<gene>
    <name evidence="1" type="primary">truB</name>
    <name type="ordered locus">Tpet_0071</name>
</gene>
<dbReference type="EC" id="5.4.99.25" evidence="1"/>
<dbReference type="EMBL" id="CP000702">
    <property type="protein sequence ID" value="ABQ46100.1"/>
    <property type="molecule type" value="Genomic_DNA"/>
</dbReference>
<dbReference type="RefSeq" id="WP_011942774.1">
    <property type="nucleotide sequence ID" value="NC_009486.1"/>
</dbReference>
<dbReference type="SMR" id="A5IIS7"/>
<dbReference type="STRING" id="390874.Tpet_0071"/>
<dbReference type="KEGG" id="tpt:Tpet_0071"/>
<dbReference type="eggNOG" id="COG0130">
    <property type="taxonomic scope" value="Bacteria"/>
</dbReference>
<dbReference type="HOGENOM" id="CLU_032087_0_2_0"/>
<dbReference type="Proteomes" id="UP000006558">
    <property type="component" value="Chromosome"/>
</dbReference>
<dbReference type="GO" id="GO:0003723">
    <property type="term" value="F:RNA binding"/>
    <property type="evidence" value="ECO:0007669"/>
    <property type="project" value="InterPro"/>
</dbReference>
<dbReference type="GO" id="GO:0160148">
    <property type="term" value="F:tRNA pseudouridine(55) synthase activity"/>
    <property type="evidence" value="ECO:0007669"/>
    <property type="project" value="UniProtKB-EC"/>
</dbReference>
<dbReference type="GO" id="GO:1990481">
    <property type="term" value="P:mRNA pseudouridine synthesis"/>
    <property type="evidence" value="ECO:0007669"/>
    <property type="project" value="TreeGrafter"/>
</dbReference>
<dbReference type="GO" id="GO:0031119">
    <property type="term" value="P:tRNA pseudouridine synthesis"/>
    <property type="evidence" value="ECO:0007669"/>
    <property type="project" value="UniProtKB-UniRule"/>
</dbReference>
<dbReference type="CDD" id="cd02573">
    <property type="entry name" value="PseudoU_synth_EcTruB"/>
    <property type="match status" value="1"/>
</dbReference>
<dbReference type="CDD" id="cd21905">
    <property type="entry name" value="PUA_TruB_thermotogae"/>
    <property type="match status" value="1"/>
</dbReference>
<dbReference type="Gene3D" id="3.30.2350.10">
    <property type="entry name" value="Pseudouridine synthase"/>
    <property type="match status" value="1"/>
</dbReference>
<dbReference type="Gene3D" id="2.30.130.10">
    <property type="entry name" value="PUA domain"/>
    <property type="match status" value="1"/>
</dbReference>
<dbReference type="HAMAP" id="MF_01080">
    <property type="entry name" value="TruB_bact"/>
    <property type="match status" value="1"/>
</dbReference>
<dbReference type="InterPro" id="IPR020103">
    <property type="entry name" value="PsdUridine_synth_cat_dom_sf"/>
</dbReference>
<dbReference type="InterPro" id="IPR002501">
    <property type="entry name" value="PsdUridine_synth_N"/>
</dbReference>
<dbReference type="InterPro" id="IPR002478">
    <property type="entry name" value="PUA"/>
</dbReference>
<dbReference type="InterPro" id="IPR015947">
    <property type="entry name" value="PUA-like_sf"/>
</dbReference>
<dbReference type="InterPro" id="IPR036974">
    <property type="entry name" value="PUA_sf"/>
</dbReference>
<dbReference type="InterPro" id="IPR014780">
    <property type="entry name" value="tRNA_psdUridine_synth_TruB"/>
</dbReference>
<dbReference type="InterPro" id="IPR032819">
    <property type="entry name" value="TruB_C"/>
</dbReference>
<dbReference type="NCBIfam" id="TIGR00431">
    <property type="entry name" value="TruB"/>
    <property type="match status" value="1"/>
</dbReference>
<dbReference type="PANTHER" id="PTHR13767:SF2">
    <property type="entry name" value="PSEUDOURIDYLATE SYNTHASE TRUB1"/>
    <property type="match status" value="1"/>
</dbReference>
<dbReference type="PANTHER" id="PTHR13767">
    <property type="entry name" value="TRNA-PSEUDOURIDINE SYNTHASE"/>
    <property type="match status" value="1"/>
</dbReference>
<dbReference type="Pfam" id="PF01472">
    <property type="entry name" value="PUA"/>
    <property type="match status" value="1"/>
</dbReference>
<dbReference type="Pfam" id="PF16198">
    <property type="entry name" value="TruB_C_2"/>
    <property type="match status" value="1"/>
</dbReference>
<dbReference type="Pfam" id="PF01509">
    <property type="entry name" value="TruB_N"/>
    <property type="match status" value="1"/>
</dbReference>
<dbReference type="SUPFAM" id="SSF55120">
    <property type="entry name" value="Pseudouridine synthase"/>
    <property type="match status" value="1"/>
</dbReference>
<dbReference type="SUPFAM" id="SSF88697">
    <property type="entry name" value="PUA domain-like"/>
    <property type="match status" value="1"/>
</dbReference>
<dbReference type="PROSITE" id="PS50890">
    <property type="entry name" value="PUA"/>
    <property type="match status" value="1"/>
</dbReference>
<protein>
    <recommendedName>
        <fullName evidence="1">tRNA pseudouridine synthase B</fullName>
        <ecNumber evidence="1">5.4.99.25</ecNumber>
    </recommendedName>
    <alternativeName>
        <fullName evidence="1">tRNA pseudouridine(55) synthase</fullName>
        <shortName evidence="1">Psi55 synthase</shortName>
    </alternativeName>
    <alternativeName>
        <fullName evidence="1">tRNA pseudouridylate synthase</fullName>
    </alternativeName>
    <alternativeName>
        <fullName evidence="1">tRNA-uridine isomerase</fullName>
    </alternativeName>
</protein>
<feature type="chain" id="PRO_1000084709" description="tRNA pseudouridine synthase B">
    <location>
        <begin position="1"/>
        <end position="309"/>
    </location>
</feature>
<feature type="domain" description="PUA" evidence="1">
    <location>
        <begin position="229"/>
        <end position="306"/>
    </location>
</feature>
<feature type="active site" description="Nucleophile" evidence="1">
    <location>
        <position position="39"/>
    </location>
</feature>
<reference key="1">
    <citation type="submission" date="2007-05" db="EMBL/GenBank/DDBJ databases">
        <title>Complete sequence of Thermotoga petrophila RKU-1.</title>
        <authorList>
            <consortium name="US DOE Joint Genome Institute"/>
            <person name="Copeland A."/>
            <person name="Lucas S."/>
            <person name="Lapidus A."/>
            <person name="Barry K."/>
            <person name="Glavina del Rio T."/>
            <person name="Dalin E."/>
            <person name="Tice H."/>
            <person name="Pitluck S."/>
            <person name="Sims D."/>
            <person name="Brettin T."/>
            <person name="Bruce D."/>
            <person name="Detter J.C."/>
            <person name="Han C."/>
            <person name="Tapia R."/>
            <person name="Schmutz J."/>
            <person name="Larimer F."/>
            <person name="Land M."/>
            <person name="Hauser L."/>
            <person name="Kyrpides N."/>
            <person name="Mikhailova N."/>
            <person name="Nelson K."/>
            <person name="Gogarten J.P."/>
            <person name="Noll K."/>
            <person name="Richardson P."/>
        </authorList>
    </citation>
    <scope>NUCLEOTIDE SEQUENCE [LARGE SCALE GENOMIC DNA]</scope>
    <source>
        <strain>ATCC BAA-488 / DSM 13995 / JCM 10881 / RKU-1</strain>
    </source>
</reference>
<name>TRUB_THEP1</name>